<evidence type="ECO:0000250" key="1"/>
<evidence type="ECO:0000255" key="2">
    <source>
        <dbReference type="PROSITE-ProRule" id="PRU00042"/>
    </source>
</evidence>
<evidence type="ECO:0000269" key="3">
    <source>
    </source>
</evidence>
<accession>Q9UTL5</accession>
<name>TF3A_SCHPO</name>
<comment type="function">
    <text evidence="3">Is required for correct transcription of 5S RNA genes by RNA polymerase III. Also binds the transcribed 5S RNA's. Initiates transcription of the 5S ribosomal RNA gene.</text>
</comment>
<comment type="subcellular location">
    <subcellularLocation>
        <location evidence="1">Nucleus</location>
    </subcellularLocation>
</comment>
<sequence length="374" mass="43851">MCHFNELSIEIESKNLRSAKKIFHCPYEECGKKYSRPSLLEQHLRTHSNERPFVCDYTGCSKAFYRKSHLKIHKRCHTNVKPFSCHYDGCDAQFYTQQHLERHIEVHRKPKPYACTWEGCDECFSKHQQLRSHISACHTHLLPYPCTYQDCELRFATKQKLQNHVNRAHEKIISYSCPHESCVGHEGFEKWSQLQNHIREAHVPSCSICGRQFKTAAHLRHHVVLHQTTLEERKTYHCPMEGCKKSFTRSSALKKHISVIHEGNMAFHCDSCGTKFGYKHMLQRHLERGTCKKAHKPYINECGIKHDGIEGVAIHDQKEKELSSNLVSDVAKKIINEVTGHGYKEAREYSCSFPECNYRFKRLYDMHRHLNSHH</sequence>
<gene>
    <name type="primary">sfc2</name>
    <name type="ORF">SPAC144.09c</name>
</gene>
<keyword id="KW-0238">DNA-binding</keyword>
<keyword id="KW-0479">Metal-binding</keyword>
<keyword id="KW-0539">Nucleus</keyword>
<keyword id="KW-1185">Reference proteome</keyword>
<keyword id="KW-0677">Repeat</keyword>
<keyword id="KW-0694">RNA-binding</keyword>
<keyword id="KW-0804">Transcription</keyword>
<keyword id="KW-0805">Transcription regulation</keyword>
<keyword id="KW-0862">Zinc</keyword>
<keyword id="KW-0863">Zinc-finger</keyword>
<proteinExistence type="evidence at transcript level"/>
<feature type="chain" id="PRO_0000047085" description="Transcription factor IIIA">
    <location>
        <begin position="1"/>
        <end position="374"/>
    </location>
</feature>
<feature type="zinc finger region" description="C2H2-type 1" evidence="2">
    <location>
        <begin position="23"/>
        <end position="47"/>
    </location>
</feature>
<feature type="zinc finger region" description="C2H2-type 2" evidence="2">
    <location>
        <begin position="53"/>
        <end position="77"/>
    </location>
</feature>
<feature type="zinc finger region" description="C2H2-type 3" evidence="2">
    <location>
        <begin position="83"/>
        <end position="107"/>
    </location>
</feature>
<feature type="zinc finger region" description="C2H2-type 4" evidence="2">
    <location>
        <begin position="113"/>
        <end position="138"/>
    </location>
</feature>
<feature type="zinc finger region" description="C2H2-type 5" evidence="2">
    <location>
        <begin position="144"/>
        <end position="169"/>
    </location>
</feature>
<feature type="zinc finger region" description="C2H2-type 6" evidence="2">
    <location>
        <begin position="204"/>
        <end position="226"/>
    </location>
</feature>
<feature type="zinc finger region" description="C2H2-type 7" evidence="2">
    <location>
        <begin position="236"/>
        <end position="261"/>
    </location>
</feature>
<feature type="zinc finger region" description="C2H2-type 8; atypical" evidence="2">
    <location>
        <begin position="267"/>
        <end position="291"/>
    </location>
</feature>
<feature type="zinc finger region" description="C2H2-type 9" evidence="2">
    <location>
        <begin position="349"/>
        <end position="374"/>
    </location>
</feature>
<protein>
    <recommendedName>
        <fullName>Transcription factor IIIA</fullName>
        <shortName>TFIIIA</shortName>
    </recommendedName>
</protein>
<dbReference type="EMBL" id="AY091590">
    <property type="protein sequence ID" value="AAM00046.1"/>
    <property type="molecule type" value="mRNA"/>
</dbReference>
<dbReference type="EMBL" id="CU329670">
    <property type="protein sequence ID" value="CAB59689.1"/>
    <property type="molecule type" value="Genomic_DNA"/>
</dbReference>
<dbReference type="PIR" id="T37676">
    <property type="entry name" value="T37676"/>
</dbReference>
<dbReference type="RefSeq" id="NP_594670.1">
    <property type="nucleotide sequence ID" value="NM_001020099.2"/>
</dbReference>
<dbReference type="SMR" id="Q9UTL5"/>
<dbReference type="FunCoup" id="Q9UTL5">
    <property type="interactions" value="270"/>
</dbReference>
<dbReference type="STRING" id="284812.Q9UTL5"/>
<dbReference type="PaxDb" id="4896-SPAC144.09c.1"/>
<dbReference type="EnsemblFungi" id="SPAC144.09c.1">
    <property type="protein sequence ID" value="SPAC144.09c.1:pep"/>
    <property type="gene ID" value="SPAC144.09c"/>
</dbReference>
<dbReference type="GeneID" id="2542887"/>
<dbReference type="KEGG" id="spo:2542887"/>
<dbReference type="PomBase" id="SPAC144.09c">
    <property type="gene designation" value="sfc2"/>
</dbReference>
<dbReference type="VEuPathDB" id="FungiDB:SPAC144.09c"/>
<dbReference type="eggNOG" id="KOG1721">
    <property type="taxonomic scope" value="Eukaryota"/>
</dbReference>
<dbReference type="HOGENOM" id="CLU_002678_91_2_1"/>
<dbReference type="InParanoid" id="Q9UTL5"/>
<dbReference type="OMA" id="HYNAVHD"/>
<dbReference type="PhylomeDB" id="Q9UTL5"/>
<dbReference type="Reactome" id="R-SPO-3214841">
    <property type="pathway name" value="PKMTs methylate histone lysines"/>
</dbReference>
<dbReference type="Reactome" id="R-SPO-8951664">
    <property type="pathway name" value="Neddylation"/>
</dbReference>
<dbReference type="Reactome" id="R-SPO-983168">
    <property type="pathway name" value="Antigen processing: Ubiquitination &amp; Proteasome degradation"/>
</dbReference>
<dbReference type="PRO" id="PR:Q9UTL5"/>
<dbReference type="Proteomes" id="UP000002485">
    <property type="component" value="Chromosome I"/>
</dbReference>
<dbReference type="GO" id="GO:0005829">
    <property type="term" value="C:cytosol"/>
    <property type="evidence" value="ECO:0007005"/>
    <property type="project" value="PomBase"/>
</dbReference>
<dbReference type="GO" id="GO:0005634">
    <property type="term" value="C:nucleus"/>
    <property type="evidence" value="ECO:0007005"/>
    <property type="project" value="PomBase"/>
</dbReference>
<dbReference type="GO" id="GO:0008097">
    <property type="term" value="F:5S rRNA binding"/>
    <property type="evidence" value="ECO:0000314"/>
    <property type="project" value="PomBase"/>
</dbReference>
<dbReference type="GO" id="GO:0003677">
    <property type="term" value="F:DNA binding"/>
    <property type="evidence" value="ECO:0000314"/>
    <property type="project" value="PomBase"/>
</dbReference>
<dbReference type="GO" id="GO:0000995">
    <property type="term" value="F:RNA polymerase III general transcription initiation factor activity"/>
    <property type="evidence" value="ECO:0000314"/>
    <property type="project" value="PomBase"/>
</dbReference>
<dbReference type="GO" id="GO:0008270">
    <property type="term" value="F:zinc ion binding"/>
    <property type="evidence" value="ECO:0007669"/>
    <property type="project" value="UniProtKB-KW"/>
</dbReference>
<dbReference type="GO" id="GO:0006384">
    <property type="term" value="P:transcription initiation at RNA polymerase III promoter"/>
    <property type="evidence" value="ECO:0000314"/>
    <property type="project" value="PomBase"/>
</dbReference>
<dbReference type="FunFam" id="3.30.160.60:FF:004026">
    <property type="match status" value="1"/>
</dbReference>
<dbReference type="FunFam" id="3.30.160.60:FF:000032">
    <property type="entry name" value="Krueppel-like factor 4"/>
    <property type="match status" value="1"/>
</dbReference>
<dbReference type="Gene3D" id="3.30.160.60">
    <property type="entry name" value="Classic Zinc Finger"/>
    <property type="match status" value="7"/>
</dbReference>
<dbReference type="InterPro" id="IPR051061">
    <property type="entry name" value="Zinc_finger_trans_reg"/>
</dbReference>
<dbReference type="InterPro" id="IPR036236">
    <property type="entry name" value="Znf_C2H2_sf"/>
</dbReference>
<dbReference type="InterPro" id="IPR013087">
    <property type="entry name" value="Znf_C2H2_type"/>
</dbReference>
<dbReference type="PANTHER" id="PTHR46179:SF13">
    <property type="entry name" value="C2H2-TYPE DOMAIN-CONTAINING PROTEIN"/>
    <property type="match status" value="1"/>
</dbReference>
<dbReference type="PANTHER" id="PTHR46179">
    <property type="entry name" value="ZINC FINGER PROTEIN"/>
    <property type="match status" value="1"/>
</dbReference>
<dbReference type="Pfam" id="PF00096">
    <property type="entry name" value="zf-C2H2"/>
    <property type="match status" value="4"/>
</dbReference>
<dbReference type="SMART" id="SM00355">
    <property type="entry name" value="ZnF_C2H2"/>
    <property type="match status" value="10"/>
</dbReference>
<dbReference type="SUPFAM" id="SSF57667">
    <property type="entry name" value="beta-beta-alpha zinc fingers"/>
    <property type="match status" value="4"/>
</dbReference>
<dbReference type="PROSITE" id="PS00028">
    <property type="entry name" value="ZINC_FINGER_C2H2_1"/>
    <property type="match status" value="8"/>
</dbReference>
<dbReference type="PROSITE" id="PS50157">
    <property type="entry name" value="ZINC_FINGER_C2H2_2"/>
    <property type="match status" value="9"/>
</dbReference>
<reference key="1">
    <citation type="journal article" date="2002" name="Nucleic Acids Res.">
        <title>Identification and characterization of transcription factor IIIA from Schizosaccharomyces pombe.</title>
        <authorList>
            <person name="Schulman D.B."/>
            <person name="Setzer D.R."/>
        </authorList>
    </citation>
    <scope>NUCLEOTIDE SEQUENCE [MRNA]</scope>
    <scope>FUNCTION</scope>
</reference>
<reference key="2">
    <citation type="journal article" date="2002" name="Nature">
        <title>The genome sequence of Schizosaccharomyces pombe.</title>
        <authorList>
            <person name="Wood V."/>
            <person name="Gwilliam R."/>
            <person name="Rajandream M.A."/>
            <person name="Lyne M.H."/>
            <person name="Lyne R."/>
            <person name="Stewart A."/>
            <person name="Sgouros J.G."/>
            <person name="Peat N."/>
            <person name="Hayles J."/>
            <person name="Baker S.G."/>
            <person name="Basham D."/>
            <person name="Bowman S."/>
            <person name="Brooks K."/>
            <person name="Brown D."/>
            <person name="Brown S."/>
            <person name="Chillingworth T."/>
            <person name="Churcher C.M."/>
            <person name="Collins M."/>
            <person name="Connor R."/>
            <person name="Cronin A."/>
            <person name="Davis P."/>
            <person name="Feltwell T."/>
            <person name="Fraser A."/>
            <person name="Gentles S."/>
            <person name="Goble A."/>
            <person name="Hamlin N."/>
            <person name="Harris D.E."/>
            <person name="Hidalgo J."/>
            <person name="Hodgson G."/>
            <person name="Holroyd S."/>
            <person name="Hornsby T."/>
            <person name="Howarth S."/>
            <person name="Huckle E.J."/>
            <person name="Hunt S."/>
            <person name="Jagels K."/>
            <person name="James K.D."/>
            <person name="Jones L."/>
            <person name="Jones M."/>
            <person name="Leather S."/>
            <person name="McDonald S."/>
            <person name="McLean J."/>
            <person name="Mooney P."/>
            <person name="Moule S."/>
            <person name="Mungall K.L."/>
            <person name="Murphy L.D."/>
            <person name="Niblett D."/>
            <person name="Odell C."/>
            <person name="Oliver K."/>
            <person name="O'Neil S."/>
            <person name="Pearson D."/>
            <person name="Quail M.A."/>
            <person name="Rabbinowitsch E."/>
            <person name="Rutherford K.M."/>
            <person name="Rutter S."/>
            <person name="Saunders D."/>
            <person name="Seeger K."/>
            <person name="Sharp S."/>
            <person name="Skelton J."/>
            <person name="Simmonds M.N."/>
            <person name="Squares R."/>
            <person name="Squares S."/>
            <person name="Stevens K."/>
            <person name="Taylor K."/>
            <person name="Taylor R.G."/>
            <person name="Tivey A."/>
            <person name="Walsh S.V."/>
            <person name="Warren T."/>
            <person name="Whitehead S."/>
            <person name="Woodward J.R."/>
            <person name="Volckaert G."/>
            <person name="Aert R."/>
            <person name="Robben J."/>
            <person name="Grymonprez B."/>
            <person name="Weltjens I."/>
            <person name="Vanstreels E."/>
            <person name="Rieger M."/>
            <person name="Schaefer M."/>
            <person name="Mueller-Auer S."/>
            <person name="Gabel C."/>
            <person name="Fuchs M."/>
            <person name="Duesterhoeft A."/>
            <person name="Fritzc C."/>
            <person name="Holzer E."/>
            <person name="Moestl D."/>
            <person name="Hilbert H."/>
            <person name="Borzym K."/>
            <person name="Langer I."/>
            <person name="Beck A."/>
            <person name="Lehrach H."/>
            <person name="Reinhardt R."/>
            <person name="Pohl T.M."/>
            <person name="Eger P."/>
            <person name="Zimmermann W."/>
            <person name="Wedler H."/>
            <person name="Wambutt R."/>
            <person name="Purnelle B."/>
            <person name="Goffeau A."/>
            <person name="Cadieu E."/>
            <person name="Dreano S."/>
            <person name="Gloux S."/>
            <person name="Lelaure V."/>
            <person name="Mottier S."/>
            <person name="Galibert F."/>
            <person name="Aves S.J."/>
            <person name="Xiang Z."/>
            <person name="Hunt C."/>
            <person name="Moore K."/>
            <person name="Hurst S.M."/>
            <person name="Lucas M."/>
            <person name="Rochet M."/>
            <person name="Gaillardin C."/>
            <person name="Tallada V.A."/>
            <person name="Garzon A."/>
            <person name="Thode G."/>
            <person name="Daga R.R."/>
            <person name="Cruzado L."/>
            <person name="Jimenez J."/>
            <person name="Sanchez M."/>
            <person name="del Rey F."/>
            <person name="Benito J."/>
            <person name="Dominguez A."/>
            <person name="Revuelta J.L."/>
            <person name="Moreno S."/>
            <person name="Armstrong J."/>
            <person name="Forsburg S.L."/>
            <person name="Cerutti L."/>
            <person name="Lowe T."/>
            <person name="McCombie W.R."/>
            <person name="Paulsen I."/>
            <person name="Potashkin J."/>
            <person name="Shpakovski G.V."/>
            <person name="Ussery D."/>
            <person name="Barrell B.G."/>
            <person name="Nurse P."/>
        </authorList>
    </citation>
    <scope>NUCLEOTIDE SEQUENCE [LARGE SCALE GENOMIC DNA]</scope>
    <source>
        <strain>972 / ATCC 24843</strain>
    </source>
</reference>
<organism>
    <name type="scientific">Schizosaccharomyces pombe (strain 972 / ATCC 24843)</name>
    <name type="common">Fission yeast</name>
    <dbReference type="NCBI Taxonomy" id="284812"/>
    <lineage>
        <taxon>Eukaryota</taxon>
        <taxon>Fungi</taxon>
        <taxon>Dikarya</taxon>
        <taxon>Ascomycota</taxon>
        <taxon>Taphrinomycotina</taxon>
        <taxon>Schizosaccharomycetes</taxon>
        <taxon>Schizosaccharomycetales</taxon>
        <taxon>Schizosaccharomycetaceae</taxon>
        <taxon>Schizosaccharomyces</taxon>
    </lineage>
</organism>